<comment type="catalytic activity">
    <reaction evidence="1">
        <text>(2R)-3-phosphoglycerate + ATP = (2R)-3-phospho-glyceroyl phosphate + ADP</text>
        <dbReference type="Rhea" id="RHEA:14801"/>
        <dbReference type="ChEBI" id="CHEBI:30616"/>
        <dbReference type="ChEBI" id="CHEBI:57604"/>
        <dbReference type="ChEBI" id="CHEBI:58272"/>
        <dbReference type="ChEBI" id="CHEBI:456216"/>
        <dbReference type="EC" id="2.7.2.3"/>
    </reaction>
</comment>
<comment type="pathway">
    <text evidence="1">Carbohydrate degradation; glycolysis; pyruvate from D-glyceraldehyde 3-phosphate: step 2/5.</text>
</comment>
<comment type="subunit">
    <text evidence="1">Monomer.</text>
</comment>
<comment type="subcellular location">
    <subcellularLocation>
        <location evidence="1">Cytoplasm</location>
    </subcellularLocation>
</comment>
<comment type="similarity">
    <text evidence="1">Belongs to the phosphoglycerate kinase family.</text>
</comment>
<dbReference type="EC" id="2.7.2.3" evidence="1"/>
<dbReference type="EMBL" id="CP000412">
    <property type="protein sequence ID" value="ABJ58201.1"/>
    <property type="molecule type" value="Genomic_DNA"/>
</dbReference>
<dbReference type="RefSeq" id="WP_003618962.1">
    <property type="nucleotide sequence ID" value="NC_008529.1"/>
</dbReference>
<dbReference type="SMR" id="Q04BH1"/>
<dbReference type="KEGG" id="lbu:LBUL_0568"/>
<dbReference type="HOGENOM" id="CLU_025427_0_2_9"/>
<dbReference type="BioCyc" id="LDEL321956:LBUL_RS02695-MONOMER"/>
<dbReference type="UniPathway" id="UPA00109">
    <property type="reaction ID" value="UER00185"/>
</dbReference>
<dbReference type="GO" id="GO:0005829">
    <property type="term" value="C:cytosol"/>
    <property type="evidence" value="ECO:0007669"/>
    <property type="project" value="TreeGrafter"/>
</dbReference>
<dbReference type="GO" id="GO:0043531">
    <property type="term" value="F:ADP binding"/>
    <property type="evidence" value="ECO:0007669"/>
    <property type="project" value="TreeGrafter"/>
</dbReference>
<dbReference type="GO" id="GO:0005524">
    <property type="term" value="F:ATP binding"/>
    <property type="evidence" value="ECO:0007669"/>
    <property type="project" value="UniProtKB-KW"/>
</dbReference>
<dbReference type="GO" id="GO:0004618">
    <property type="term" value="F:phosphoglycerate kinase activity"/>
    <property type="evidence" value="ECO:0007669"/>
    <property type="project" value="UniProtKB-UniRule"/>
</dbReference>
<dbReference type="GO" id="GO:0006094">
    <property type="term" value="P:gluconeogenesis"/>
    <property type="evidence" value="ECO:0007669"/>
    <property type="project" value="TreeGrafter"/>
</dbReference>
<dbReference type="GO" id="GO:0006096">
    <property type="term" value="P:glycolytic process"/>
    <property type="evidence" value="ECO:0007669"/>
    <property type="project" value="UniProtKB-UniRule"/>
</dbReference>
<dbReference type="CDD" id="cd00318">
    <property type="entry name" value="Phosphoglycerate_kinase"/>
    <property type="match status" value="1"/>
</dbReference>
<dbReference type="FunFam" id="3.40.50.1260:FF:000001">
    <property type="entry name" value="Phosphoglycerate kinase"/>
    <property type="match status" value="1"/>
</dbReference>
<dbReference type="FunFam" id="3.40.50.1260:FF:000008">
    <property type="entry name" value="Phosphoglycerate kinase"/>
    <property type="match status" value="1"/>
</dbReference>
<dbReference type="Gene3D" id="3.40.50.1260">
    <property type="entry name" value="Phosphoglycerate kinase, N-terminal domain"/>
    <property type="match status" value="2"/>
</dbReference>
<dbReference type="HAMAP" id="MF_00145">
    <property type="entry name" value="Phosphoglyc_kinase"/>
    <property type="match status" value="1"/>
</dbReference>
<dbReference type="InterPro" id="IPR001576">
    <property type="entry name" value="Phosphoglycerate_kinase"/>
</dbReference>
<dbReference type="InterPro" id="IPR015911">
    <property type="entry name" value="Phosphoglycerate_kinase_CS"/>
</dbReference>
<dbReference type="InterPro" id="IPR015824">
    <property type="entry name" value="Phosphoglycerate_kinase_N"/>
</dbReference>
<dbReference type="InterPro" id="IPR036043">
    <property type="entry name" value="Phosphoglycerate_kinase_sf"/>
</dbReference>
<dbReference type="PANTHER" id="PTHR11406">
    <property type="entry name" value="PHOSPHOGLYCERATE KINASE"/>
    <property type="match status" value="1"/>
</dbReference>
<dbReference type="PANTHER" id="PTHR11406:SF23">
    <property type="entry name" value="PHOSPHOGLYCERATE KINASE 1, CHLOROPLASTIC-RELATED"/>
    <property type="match status" value="1"/>
</dbReference>
<dbReference type="Pfam" id="PF00162">
    <property type="entry name" value="PGK"/>
    <property type="match status" value="1"/>
</dbReference>
<dbReference type="PIRSF" id="PIRSF000724">
    <property type="entry name" value="Pgk"/>
    <property type="match status" value="1"/>
</dbReference>
<dbReference type="PRINTS" id="PR00477">
    <property type="entry name" value="PHGLYCKINASE"/>
</dbReference>
<dbReference type="SUPFAM" id="SSF53748">
    <property type="entry name" value="Phosphoglycerate kinase"/>
    <property type="match status" value="1"/>
</dbReference>
<dbReference type="PROSITE" id="PS00111">
    <property type="entry name" value="PGLYCERATE_KINASE"/>
    <property type="match status" value="1"/>
</dbReference>
<accession>Q04BH1</accession>
<evidence type="ECO:0000255" key="1">
    <source>
        <dbReference type="HAMAP-Rule" id="MF_00145"/>
    </source>
</evidence>
<name>PGK_LACDB</name>
<protein>
    <recommendedName>
        <fullName evidence="1">Phosphoglycerate kinase</fullName>
        <ecNumber evidence="1">2.7.2.3</ecNumber>
    </recommendedName>
</protein>
<feature type="chain" id="PRO_1000009621" description="Phosphoglycerate kinase">
    <location>
        <begin position="1"/>
        <end position="403"/>
    </location>
</feature>
<feature type="binding site" evidence="1">
    <location>
        <begin position="21"/>
        <end position="23"/>
    </location>
    <ligand>
        <name>substrate</name>
    </ligand>
</feature>
<feature type="binding site" evidence="1">
    <location>
        <position position="36"/>
    </location>
    <ligand>
        <name>substrate</name>
    </ligand>
</feature>
<feature type="binding site" evidence="1">
    <location>
        <begin position="59"/>
        <end position="62"/>
    </location>
    <ligand>
        <name>substrate</name>
    </ligand>
</feature>
<feature type="binding site" evidence="1">
    <location>
        <position position="119"/>
    </location>
    <ligand>
        <name>substrate</name>
    </ligand>
</feature>
<feature type="binding site" evidence="1">
    <location>
        <position position="159"/>
    </location>
    <ligand>
        <name>substrate</name>
    </ligand>
</feature>
<feature type="binding site" evidence="1">
    <location>
        <position position="214"/>
    </location>
    <ligand>
        <name>ATP</name>
        <dbReference type="ChEBI" id="CHEBI:30616"/>
    </ligand>
</feature>
<feature type="binding site" evidence="1">
    <location>
        <position position="301"/>
    </location>
    <ligand>
        <name>ATP</name>
        <dbReference type="ChEBI" id="CHEBI:30616"/>
    </ligand>
</feature>
<feature type="binding site" evidence="1">
    <location>
        <position position="332"/>
    </location>
    <ligand>
        <name>ATP</name>
        <dbReference type="ChEBI" id="CHEBI:30616"/>
    </ligand>
</feature>
<feature type="binding site" evidence="1">
    <location>
        <begin position="359"/>
        <end position="362"/>
    </location>
    <ligand>
        <name>ATP</name>
        <dbReference type="ChEBI" id="CHEBI:30616"/>
    </ligand>
</feature>
<reference key="1">
    <citation type="journal article" date="2006" name="Proc. Natl. Acad. Sci. U.S.A.">
        <title>Comparative genomics of the lactic acid bacteria.</title>
        <authorList>
            <person name="Makarova K.S."/>
            <person name="Slesarev A."/>
            <person name="Wolf Y.I."/>
            <person name="Sorokin A."/>
            <person name="Mirkin B."/>
            <person name="Koonin E.V."/>
            <person name="Pavlov A."/>
            <person name="Pavlova N."/>
            <person name="Karamychev V."/>
            <person name="Polouchine N."/>
            <person name="Shakhova V."/>
            <person name="Grigoriev I."/>
            <person name="Lou Y."/>
            <person name="Rohksar D."/>
            <person name="Lucas S."/>
            <person name="Huang K."/>
            <person name="Goodstein D.M."/>
            <person name="Hawkins T."/>
            <person name="Plengvidhya V."/>
            <person name="Welker D."/>
            <person name="Hughes J."/>
            <person name="Goh Y."/>
            <person name="Benson A."/>
            <person name="Baldwin K."/>
            <person name="Lee J.-H."/>
            <person name="Diaz-Muniz I."/>
            <person name="Dosti B."/>
            <person name="Smeianov V."/>
            <person name="Wechter W."/>
            <person name="Barabote R."/>
            <person name="Lorca G."/>
            <person name="Altermann E."/>
            <person name="Barrangou R."/>
            <person name="Ganesan B."/>
            <person name="Xie Y."/>
            <person name="Rawsthorne H."/>
            <person name="Tamir D."/>
            <person name="Parker C."/>
            <person name="Breidt F."/>
            <person name="Broadbent J.R."/>
            <person name="Hutkins R."/>
            <person name="O'Sullivan D."/>
            <person name="Steele J."/>
            <person name="Unlu G."/>
            <person name="Saier M.H. Jr."/>
            <person name="Klaenhammer T."/>
            <person name="Richardson P."/>
            <person name="Kozyavkin S."/>
            <person name="Weimer B.C."/>
            <person name="Mills D.A."/>
        </authorList>
    </citation>
    <scope>NUCLEOTIDE SEQUENCE [LARGE SCALE GENOMIC DNA]</scope>
    <source>
        <strain>ATCC BAA-365 / Lb-18</strain>
    </source>
</reference>
<keyword id="KW-0067">ATP-binding</keyword>
<keyword id="KW-0963">Cytoplasm</keyword>
<keyword id="KW-0324">Glycolysis</keyword>
<keyword id="KW-0418">Kinase</keyword>
<keyword id="KW-0547">Nucleotide-binding</keyword>
<keyword id="KW-0808">Transferase</keyword>
<sequence>MAKLIVSDVDVKDKKVLVRVDFNVPIKDGVIGDDNRIVAALPTIKYIIENGGKAILLSHLGRIKSDEDKKSLSLAPVAKRLGELLEKPVTFVPSNEGKEVEDAINNMKDGDVVVLENTRFQDIDNDFGKRESKNDPKLGEYWASLGDVFVNDAFGTAHRSHASNVGIATAMKAAGKPAAAGFLLEKEIKFLGNAVANPVHPFVTILGGAKVSDKIGVITNLIPKADHIIIGGGMAYTFLKAQGHNIGKSLVEDDKVEFAKELLEKAGDKLVLPIDNVAATEFNNDAASEVVGQDIPDNEMGLDIGPKTIELFKKTLEGAKTVVWNGPMGVFEMPNFAKGTLEVGRALADLPDATTIVGGGDSTAAAKQLGIAPKLTHISTGGGASLEYLEGKELPGIACVSDK</sequence>
<organism>
    <name type="scientific">Lactobacillus delbrueckii subsp. bulgaricus (strain ATCC BAA-365 / Lb-18)</name>
    <dbReference type="NCBI Taxonomy" id="321956"/>
    <lineage>
        <taxon>Bacteria</taxon>
        <taxon>Bacillati</taxon>
        <taxon>Bacillota</taxon>
        <taxon>Bacilli</taxon>
        <taxon>Lactobacillales</taxon>
        <taxon>Lactobacillaceae</taxon>
        <taxon>Lactobacillus</taxon>
    </lineage>
</organism>
<gene>
    <name evidence="1" type="primary">pgk</name>
    <name type="ordered locus">LBUL_0568</name>
</gene>
<proteinExistence type="inferred from homology"/>